<proteinExistence type="inferred from homology"/>
<comment type="function">
    <text evidence="1">Fluoride-specific ion channel. Important for reducing fluoride concentration in the cell, thus reducing its toxicity.</text>
</comment>
<comment type="catalytic activity">
    <reaction evidence="1">
        <text>fluoride(in) = fluoride(out)</text>
        <dbReference type="Rhea" id="RHEA:76159"/>
        <dbReference type="ChEBI" id="CHEBI:17051"/>
    </reaction>
    <physiologicalReaction direction="left-to-right" evidence="1">
        <dbReference type="Rhea" id="RHEA:76160"/>
    </physiologicalReaction>
</comment>
<comment type="activity regulation">
    <text evidence="1">Na(+) is not transported, but it plays an essential structural role and its presence is essential for fluoride channel function.</text>
</comment>
<comment type="subcellular location">
    <subcellularLocation>
        <location evidence="1">Cell inner membrane</location>
        <topology evidence="1">Multi-pass membrane protein</topology>
    </subcellularLocation>
</comment>
<comment type="similarity">
    <text evidence="1">Belongs to the fluoride channel Fluc/FEX (TC 1.A.43) family.</text>
</comment>
<evidence type="ECO:0000255" key="1">
    <source>
        <dbReference type="HAMAP-Rule" id="MF_00454"/>
    </source>
</evidence>
<protein>
    <recommendedName>
        <fullName evidence="1">Fluoride-specific ion channel FluC</fullName>
    </recommendedName>
</protein>
<gene>
    <name evidence="1" type="primary">fluC</name>
    <name evidence="1" type="synonym">crcB</name>
    <name type="ordered locus">Cphamn1_0200</name>
</gene>
<accession>B3EKJ5</accession>
<name>FLUC_CHLPB</name>
<organism>
    <name type="scientific">Chlorobium phaeobacteroides (strain BS1)</name>
    <dbReference type="NCBI Taxonomy" id="331678"/>
    <lineage>
        <taxon>Bacteria</taxon>
        <taxon>Pseudomonadati</taxon>
        <taxon>Chlorobiota</taxon>
        <taxon>Chlorobiia</taxon>
        <taxon>Chlorobiales</taxon>
        <taxon>Chlorobiaceae</taxon>
        <taxon>Chlorobium/Pelodictyon group</taxon>
        <taxon>Chlorobium</taxon>
    </lineage>
</organism>
<sequence>MPERYAALLLVGAGGFVGATARFLVALVLPFIGTGFPFGTLAVNLAGCFLIGFISQLSVSSSLVSPELRLLLATGFCGGFTTFSSYMYEIMSLLRDGEIFYSTLYLLGSIVGGILCLYFGMQLAKLWA</sequence>
<feature type="chain" id="PRO_1000125117" description="Fluoride-specific ion channel FluC">
    <location>
        <begin position="1"/>
        <end position="128"/>
    </location>
</feature>
<feature type="transmembrane region" description="Helical" evidence="1">
    <location>
        <begin position="1"/>
        <end position="21"/>
    </location>
</feature>
<feature type="transmembrane region" description="Helical" evidence="1">
    <location>
        <begin position="45"/>
        <end position="65"/>
    </location>
</feature>
<feature type="transmembrane region" description="Helical" evidence="1">
    <location>
        <begin position="70"/>
        <end position="90"/>
    </location>
</feature>
<feature type="transmembrane region" description="Helical" evidence="1">
    <location>
        <begin position="99"/>
        <end position="119"/>
    </location>
</feature>
<feature type="binding site" evidence="1">
    <location>
        <position position="78"/>
    </location>
    <ligand>
        <name>Na(+)</name>
        <dbReference type="ChEBI" id="CHEBI:29101"/>
        <note>structural</note>
    </ligand>
</feature>
<feature type="binding site" evidence="1">
    <location>
        <position position="81"/>
    </location>
    <ligand>
        <name>Na(+)</name>
        <dbReference type="ChEBI" id="CHEBI:29101"/>
        <note>structural</note>
    </ligand>
</feature>
<keyword id="KW-0997">Cell inner membrane</keyword>
<keyword id="KW-1003">Cell membrane</keyword>
<keyword id="KW-0407">Ion channel</keyword>
<keyword id="KW-0406">Ion transport</keyword>
<keyword id="KW-0472">Membrane</keyword>
<keyword id="KW-0479">Metal-binding</keyword>
<keyword id="KW-0915">Sodium</keyword>
<keyword id="KW-0812">Transmembrane</keyword>
<keyword id="KW-1133">Transmembrane helix</keyword>
<keyword id="KW-0813">Transport</keyword>
<reference key="1">
    <citation type="submission" date="2008-06" db="EMBL/GenBank/DDBJ databases">
        <title>Complete sequence of Chlorobium phaeobacteroides BS1.</title>
        <authorList>
            <consortium name="US DOE Joint Genome Institute"/>
            <person name="Lucas S."/>
            <person name="Copeland A."/>
            <person name="Lapidus A."/>
            <person name="Glavina del Rio T."/>
            <person name="Dalin E."/>
            <person name="Tice H."/>
            <person name="Bruce D."/>
            <person name="Goodwin L."/>
            <person name="Pitluck S."/>
            <person name="Schmutz J."/>
            <person name="Larimer F."/>
            <person name="Land M."/>
            <person name="Hauser L."/>
            <person name="Kyrpides N."/>
            <person name="Ovchinnikova G."/>
            <person name="Li T."/>
            <person name="Liu Z."/>
            <person name="Zhao F."/>
            <person name="Overmann J."/>
            <person name="Bryant D.A."/>
            <person name="Richardson P."/>
        </authorList>
    </citation>
    <scope>NUCLEOTIDE SEQUENCE [LARGE SCALE GENOMIC DNA]</scope>
    <source>
        <strain>BS1</strain>
    </source>
</reference>
<dbReference type="EMBL" id="CP001101">
    <property type="protein sequence ID" value="ACE03173.1"/>
    <property type="molecule type" value="Genomic_DNA"/>
</dbReference>
<dbReference type="SMR" id="B3EKJ5"/>
<dbReference type="STRING" id="331678.Cphamn1_0200"/>
<dbReference type="KEGG" id="cpb:Cphamn1_0200"/>
<dbReference type="eggNOG" id="COG0239">
    <property type="taxonomic scope" value="Bacteria"/>
</dbReference>
<dbReference type="HOGENOM" id="CLU_114342_2_3_10"/>
<dbReference type="OrthoDB" id="9815830at2"/>
<dbReference type="GO" id="GO:0005886">
    <property type="term" value="C:plasma membrane"/>
    <property type="evidence" value="ECO:0007669"/>
    <property type="project" value="UniProtKB-SubCell"/>
</dbReference>
<dbReference type="GO" id="GO:0062054">
    <property type="term" value="F:fluoride channel activity"/>
    <property type="evidence" value="ECO:0007669"/>
    <property type="project" value="UniProtKB-UniRule"/>
</dbReference>
<dbReference type="GO" id="GO:0046872">
    <property type="term" value="F:metal ion binding"/>
    <property type="evidence" value="ECO:0007669"/>
    <property type="project" value="UniProtKB-KW"/>
</dbReference>
<dbReference type="GO" id="GO:0140114">
    <property type="term" value="P:cellular detoxification of fluoride"/>
    <property type="evidence" value="ECO:0007669"/>
    <property type="project" value="UniProtKB-UniRule"/>
</dbReference>
<dbReference type="HAMAP" id="MF_00454">
    <property type="entry name" value="FluC"/>
    <property type="match status" value="1"/>
</dbReference>
<dbReference type="InterPro" id="IPR003691">
    <property type="entry name" value="FluC"/>
</dbReference>
<dbReference type="NCBIfam" id="TIGR00494">
    <property type="entry name" value="crcB"/>
    <property type="match status" value="1"/>
</dbReference>
<dbReference type="PANTHER" id="PTHR28259">
    <property type="entry name" value="FLUORIDE EXPORT PROTEIN 1-RELATED"/>
    <property type="match status" value="1"/>
</dbReference>
<dbReference type="PANTHER" id="PTHR28259:SF1">
    <property type="entry name" value="FLUORIDE EXPORT PROTEIN 1-RELATED"/>
    <property type="match status" value="1"/>
</dbReference>
<dbReference type="Pfam" id="PF02537">
    <property type="entry name" value="CRCB"/>
    <property type="match status" value="1"/>
</dbReference>